<protein>
    <recommendedName>
        <fullName>WUSCHEL-related homeobox 13</fullName>
    </recommendedName>
    <alternativeName>
        <fullName>OsWOX13</fullName>
    </alternativeName>
    <alternativeName>
        <fullName>Protein WOX9</fullName>
    </alternativeName>
</protein>
<keyword id="KW-0217">Developmental protein</keyword>
<keyword id="KW-0238">DNA-binding</keyword>
<keyword id="KW-0371">Homeobox</keyword>
<keyword id="KW-0539">Nucleus</keyword>
<keyword id="KW-1185">Reference proteome</keyword>
<keyword id="KW-0804">Transcription</keyword>
<keyword id="KW-0805">Transcription regulation</keyword>
<name>WOX13_ORYSJ</name>
<organism>
    <name type="scientific">Oryza sativa subsp. japonica</name>
    <name type="common">Rice</name>
    <dbReference type="NCBI Taxonomy" id="39947"/>
    <lineage>
        <taxon>Eukaryota</taxon>
        <taxon>Viridiplantae</taxon>
        <taxon>Streptophyta</taxon>
        <taxon>Embryophyta</taxon>
        <taxon>Tracheophyta</taxon>
        <taxon>Spermatophyta</taxon>
        <taxon>Magnoliopsida</taxon>
        <taxon>Liliopsida</taxon>
        <taxon>Poales</taxon>
        <taxon>Poaceae</taxon>
        <taxon>BOP clade</taxon>
        <taxon>Oryzoideae</taxon>
        <taxon>Oryzeae</taxon>
        <taxon>Oryzinae</taxon>
        <taxon>Oryza</taxon>
        <taxon>Oryza sativa</taxon>
    </lineage>
</organism>
<comment type="function">
    <text evidence="1">Transcription factor which may be involved in developmental processes.</text>
</comment>
<comment type="subcellular location">
    <subcellularLocation>
        <location evidence="2">Nucleus</location>
    </subcellularLocation>
</comment>
<comment type="similarity">
    <text evidence="4">Belongs to the WUS homeobox family.</text>
</comment>
<comment type="sequence caution" evidence="4">
    <conflict type="erroneous gene model prediction">
        <sequence resource="EMBL-CDS" id="BAD32125"/>
    </conflict>
</comment>
<dbReference type="EMBL" id="AP006753">
    <property type="protein sequence ID" value="BAD32125.1"/>
    <property type="status" value="ALT_SEQ"/>
    <property type="molecule type" value="Genomic_DNA"/>
</dbReference>
<dbReference type="EMBL" id="AP014963">
    <property type="status" value="NOT_ANNOTATED_CDS"/>
    <property type="molecule type" value="Genomic_DNA"/>
</dbReference>
<dbReference type="EMBL" id="CM000144">
    <property type="protein sequence ID" value="EAZ40111.1"/>
    <property type="molecule type" value="Genomic_DNA"/>
</dbReference>
<dbReference type="EMBL" id="AM234752">
    <property type="protein sequence ID" value="CAJ84144.1"/>
    <property type="molecule type" value="mRNA"/>
</dbReference>
<dbReference type="SMR" id="A3BKM2"/>
<dbReference type="FunCoup" id="A3BKM2">
    <property type="interactions" value="2"/>
</dbReference>
<dbReference type="STRING" id="39947.A3BKM2"/>
<dbReference type="PaxDb" id="39947-A3BKM2"/>
<dbReference type="eggNOG" id="ENOG502QVSY">
    <property type="taxonomic scope" value="Eukaryota"/>
</dbReference>
<dbReference type="HOGENOM" id="CLU_191894_0_0_1"/>
<dbReference type="InParanoid" id="A3BKM2"/>
<dbReference type="Proteomes" id="UP000000763">
    <property type="component" value="Chromosome 7"/>
</dbReference>
<dbReference type="Proteomes" id="UP000007752">
    <property type="component" value="Chromosome 7"/>
</dbReference>
<dbReference type="Proteomes" id="UP000059680">
    <property type="component" value="Chromosome 7"/>
</dbReference>
<dbReference type="GO" id="GO:0005634">
    <property type="term" value="C:nucleus"/>
    <property type="evidence" value="ECO:0007669"/>
    <property type="project" value="UniProtKB-SubCell"/>
</dbReference>
<dbReference type="GO" id="GO:0003677">
    <property type="term" value="F:DNA binding"/>
    <property type="evidence" value="ECO:0007669"/>
    <property type="project" value="UniProtKB-KW"/>
</dbReference>
<dbReference type="GO" id="GO:0003700">
    <property type="term" value="F:DNA-binding transcription factor activity"/>
    <property type="evidence" value="ECO:0007669"/>
    <property type="project" value="InterPro"/>
</dbReference>
<dbReference type="GO" id="GO:0050793">
    <property type="term" value="P:regulation of developmental process"/>
    <property type="evidence" value="ECO:0007669"/>
    <property type="project" value="InterPro"/>
</dbReference>
<dbReference type="CDD" id="cd00086">
    <property type="entry name" value="homeodomain"/>
    <property type="match status" value="1"/>
</dbReference>
<dbReference type="FunFam" id="1.10.10.60:FF:000118">
    <property type="entry name" value="WUSCHEL-related homeobox 11"/>
    <property type="match status" value="1"/>
</dbReference>
<dbReference type="Gene3D" id="1.10.10.60">
    <property type="entry name" value="Homeodomain-like"/>
    <property type="match status" value="1"/>
</dbReference>
<dbReference type="InterPro" id="IPR001356">
    <property type="entry name" value="HD"/>
</dbReference>
<dbReference type="InterPro" id="IPR009057">
    <property type="entry name" value="Homeodomain-like_sf"/>
</dbReference>
<dbReference type="InterPro" id="IPR044557">
    <property type="entry name" value="WOX8/9-like"/>
</dbReference>
<dbReference type="PANTHER" id="PTHR47288">
    <property type="entry name" value="WUSCHEL-RELATED HOMEOBOX 9"/>
    <property type="match status" value="1"/>
</dbReference>
<dbReference type="PANTHER" id="PTHR47288:SF1">
    <property type="entry name" value="WUSCHEL-RELATED HOMEOBOX 9"/>
    <property type="match status" value="1"/>
</dbReference>
<dbReference type="Pfam" id="PF00046">
    <property type="entry name" value="Homeodomain"/>
    <property type="match status" value="1"/>
</dbReference>
<dbReference type="SMART" id="SM00389">
    <property type="entry name" value="HOX"/>
    <property type="match status" value="1"/>
</dbReference>
<dbReference type="SUPFAM" id="SSF46689">
    <property type="entry name" value="Homeodomain-like"/>
    <property type="match status" value="1"/>
</dbReference>
<dbReference type="PROSITE" id="PS50071">
    <property type="entry name" value="HOMEOBOX_2"/>
    <property type="match status" value="1"/>
</dbReference>
<gene>
    <name type="primary">WOX13</name>
    <name type="ordered locus">Os07g0533100</name>
    <name type="ordered locus">LOC_Os07g34880</name>
    <name type="ORF">OsJ_023594</name>
    <name type="ORF">OSJNBa0039D04.15</name>
</gene>
<feature type="chain" id="PRO_0000308650" description="WUSCHEL-related homeobox 13">
    <location>
        <begin position="1"/>
        <end position="306"/>
    </location>
</feature>
<feature type="DNA-binding region" description="Homeobox; WUS-type" evidence="2">
    <location>
        <begin position="132"/>
        <end position="196"/>
    </location>
</feature>
<feature type="region of interest" description="Disordered" evidence="3">
    <location>
        <begin position="1"/>
        <end position="20"/>
    </location>
</feature>
<feature type="region of interest" description="Disordered" evidence="3">
    <location>
        <begin position="103"/>
        <end position="142"/>
    </location>
</feature>
<feature type="region of interest" description="Disordered" evidence="3">
    <location>
        <begin position="190"/>
        <end position="276"/>
    </location>
</feature>
<feature type="compositionally biased region" description="Pro residues" evidence="3">
    <location>
        <begin position="1"/>
        <end position="11"/>
    </location>
</feature>
<feature type="compositionally biased region" description="Basic and acidic residues" evidence="3">
    <location>
        <begin position="126"/>
        <end position="142"/>
    </location>
</feature>
<feature type="compositionally biased region" description="Gly residues" evidence="3">
    <location>
        <begin position="199"/>
        <end position="210"/>
    </location>
</feature>
<feature type="compositionally biased region" description="Pro residues" evidence="3">
    <location>
        <begin position="231"/>
        <end position="242"/>
    </location>
</feature>
<feature type="compositionally biased region" description="Low complexity" evidence="3">
    <location>
        <begin position="243"/>
        <end position="270"/>
    </location>
</feature>
<feature type="sequence conflict" description="In Ref. 4; CAJ84144." evidence="4" ref="4">
    <original>R</original>
    <variation>W</variation>
    <location>
        <position position="137"/>
    </location>
</feature>
<sequence>MMALGVPPPPSRAYVSGPLRDDDTFGGDRVRRRRRWLKEQCPAIIVHGGGRRGGVGHRALAAGVSKMRLPALNAATHRIPSTSPLSIPQTLTITRDPPYPMLPRSHGHRTGGGGFSLKSSPFSSVGEERVPDPKPRRNPRPEQIRILEAIFNSGMVNPPRDEIPRIRMQLQEYGQVGDANVFYWFQNRKSRSKNKLRSGGTGRAGLGLGGNRASEPPAAATAHREAVAPSFTPPPILPPQPVQPQQQLVSPVAAPTSLSSSSSDRSSGSSKPARATLTQAMSVTAAMDLLSPLRRSARPRQEQRHV</sequence>
<reference key="1">
    <citation type="journal article" date="2005" name="Nature">
        <title>The map-based sequence of the rice genome.</title>
        <authorList>
            <consortium name="International rice genome sequencing project (IRGSP)"/>
        </authorList>
    </citation>
    <scope>NUCLEOTIDE SEQUENCE [LARGE SCALE GENOMIC DNA]</scope>
    <source>
        <strain>cv. Nipponbare</strain>
    </source>
</reference>
<reference key="2">
    <citation type="journal article" date="2013" name="Rice">
        <title>Improvement of the Oryza sativa Nipponbare reference genome using next generation sequence and optical map data.</title>
        <authorList>
            <person name="Kawahara Y."/>
            <person name="de la Bastide M."/>
            <person name="Hamilton J.P."/>
            <person name="Kanamori H."/>
            <person name="McCombie W.R."/>
            <person name="Ouyang S."/>
            <person name="Schwartz D.C."/>
            <person name="Tanaka T."/>
            <person name="Wu J."/>
            <person name="Zhou S."/>
            <person name="Childs K.L."/>
            <person name="Davidson R.M."/>
            <person name="Lin H."/>
            <person name="Quesada-Ocampo L."/>
            <person name="Vaillancourt B."/>
            <person name="Sakai H."/>
            <person name="Lee S.S."/>
            <person name="Kim J."/>
            <person name="Numa H."/>
            <person name="Itoh T."/>
            <person name="Buell C.R."/>
            <person name="Matsumoto T."/>
        </authorList>
    </citation>
    <scope>GENOME REANNOTATION</scope>
    <source>
        <strain>cv. Nipponbare</strain>
    </source>
</reference>
<reference key="3">
    <citation type="journal article" date="2005" name="PLoS Biol.">
        <title>The genomes of Oryza sativa: a history of duplications.</title>
        <authorList>
            <person name="Yu J."/>
            <person name="Wang J."/>
            <person name="Lin W."/>
            <person name="Li S."/>
            <person name="Li H."/>
            <person name="Zhou J."/>
            <person name="Ni P."/>
            <person name="Dong W."/>
            <person name="Hu S."/>
            <person name="Zeng C."/>
            <person name="Zhang J."/>
            <person name="Zhang Y."/>
            <person name="Li R."/>
            <person name="Xu Z."/>
            <person name="Li S."/>
            <person name="Li X."/>
            <person name="Zheng H."/>
            <person name="Cong L."/>
            <person name="Lin L."/>
            <person name="Yin J."/>
            <person name="Geng J."/>
            <person name="Li G."/>
            <person name="Shi J."/>
            <person name="Liu J."/>
            <person name="Lv H."/>
            <person name="Li J."/>
            <person name="Wang J."/>
            <person name="Deng Y."/>
            <person name="Ran L."/>
            <person name="Shi X."/>
            <person name="Wang X."/>
            <person name="Wu Q."/>
            <person name="Li C."/>
            <person name="Ren X."/>
            <person name="Wang J."/>
            <person name="Wang X."/>
            <person name="Li D."/>
            <person name="Liu D."/>
            <person name="Zhang X."/>
            <person name="Ji Z."/>
            <person name="Zhao W."/>
            <person name="Sun Y."/>
            <person name="Zhang Z."/>
            <person name="Bao J."/>
            <person name="Han Y."/>
            <person name="Dong L."/>
            <person name="Ji J."/>
            <person name="Chen P."/>
            <person name="Wu S."/>
            <person name="Liu J."/>
            <person name="Xiao Y."/>
            <person name="Bu D."/>
            <person name="Tan J."/>
            <person name="Yang L."/>
            <person name="Ye C."/>
            <person name="Zhang J."/>
            <person name="Xu J."/>
            <person name="Zhou Y."/>
            <person name="Yu Y."/>
            <person name="Zhang B."/>
            <person name="Zhuang S."/>
            <person name="Wei H."/>
            <person name="Liu B."/>
            <person name="Lei M."/>
            <person name="Yu H."/>
            <person name="Li Y."/>
            <person name="Xu H."/>
            <person name="Wei S."/>
            <person name="He X."/>
            <person name="Fang L."/>
            <person name="Zhang Z."/>
            <person name="Zhang Y."/>
            <person name="Huang X."/>
            <person name="Su Z."/>
            <person name="Tong W."/>
            <person name="Li J."/>
            <person name="Tong Z."/>
            <person name="Li S."/>
            <person name="Ye J."/>
            <person name="Wang L."/>
            <person name="Fang L."/>
            <person name="Lei T."/>
            <person name="Chen C.-S."/>
            <person name="Chen H.-C."/>
            <person name="Xu Z."/>
            <person name="Li H."/>
            <person name="Huang H."/>
            <person name="Zhang F."/>
            <person name="Xu H."/>
            <person name="Li N."/>
            <person name="Zhao C."/>
            <person name="Li S."/>
            <person name="Dong L."/>
            <person name="Huang Y."/>
            <person name="Li L."/>
            <person name="Xi Y."/>
            <person name="Qi Q."/>
            <person name="Li W."/>
            <person name="Zhang B."/>
            <person name="Hu W."/>
            <person name="Zhang Y."/>
            <person name="Tian X."/>
            <person name="Jiao Y."/>
            <person name="Liang X."/>
            <person name="Jin J."/>
            <person name="Gao L."/>
            <person name="Zheng W."/>
            <person name="Hao B."/>
            <person name="Liu S.-M."/>
            <person name="Wang W."/>
            <person name="Yuan L."/>
            <person name="Cao M."/>
            <person name="McDermott J."/>
            <person name="Samudrala R."/>
            <person name="Wang J."/>
            <person name="Wong G.K.-S."/>
            <person name="Yang H."/>
        </authorList>
    </citation>
    <scope>NUCLEOTIDE SEQUENCE [LARGE SCALE GENOMIC DNA]</scope>
    <source>
        <strain>cv. Nipponbare</strain>
    </source>
</reference>
<reference key="4">
    <citation type="journal article" date="2006" name="Mol. Biol. Evol.">
        <title>The shoot stem cell niche in angiosperms: expression patterns of WUS orthologues in rice and maize imply major modifications in the course of mono- and dicot evolution.</title>
        <authorList>
            <person name="Nardmann J."/>
            <person name="Werr W."/>
        </authorList>
    </citation>
    <scope>NUCLEOTIDE SEQUENCE [MRNA] OF 132-196</scope>
</reference>
<proteinExistence type="evidence at transcript level"/>
<evidence type="ECO:0000250" key="1"/>
<evidence type="ECO:0000255" key="2">
    <source>
        <dbReference type="PROSITE-ProRule" id="PRU00108"/>
    </source>
</evidence>
<evidence type="ECO:0000256" key="3">
    <source>
        <dbReference type="SAM" id="MobiDB-lite"/>
    </source>
</evidence>
<evidence type="ECO:0000305" key="4"/>
<accession>A3BKM2</accession>
<accession>A0AAT3</accession>
<accession>Q69IP5</accession>